<name>STAD6_ARATH</name>
<reference key="1">
    <citation type="journal article" date="2000" name="Nature">
        <title>Sequence and analysis of chromosome 1 of the plant Arabidopsis thaliana.</title>
        <authorList>
            <person name="Theologis A."/>
            <person name="Ecker J.R."/>
            <person name="Palm C.J."/>
            <person name="Federspiel N.A."/>
            <person name="Kaul S."/>
            <person name="White O."/>
            <person name="Alonso J."/>
            <person name="Altafi H."/>
            <person name="Araujo R."/>
            <person name="Bowman C.L."/>
            <person name="Brooks S.Y."/>
            <person name="Buehler E."/>
            <person name="Chan A."/>
            <person name="Chao Q."/>
            <person name="Chen H."/>
            <person name="Cheuk R.F."/>
            <person name="Chin C.W."/>
            <person name="Chung M.K."/>
            <person name="Conn L."/>
            <person name="Conway A.B."/>
            <person name="Conway A.R."/>
            <person name="Creasy T.H."/>
            <person name="Dewar K."/>
            <person name="Dunn P."/>
            <person name="Etgu P."/>
            <person name="Feldblyum T.V."/>
            <person name="Feng J.-D."/>
            <person name="Fong B."/>
            <person name="Fujii C.Y."/>
            <person name="Gill J.E."/>
            <person name="Goldsmith A.D."/>
            <person name="Haas B."/>
            <person name="Hansen N.F."/>
            <person name="Hughes B."/>
            <person name="Huizar L."/>
            <person name="Hunter J.L."/>
            <person name="Jenkins J."/>
            <person name="Johnson-Hopson C."/>
            <person name="Khan S."/>
            <person name="Khaykin E."/>
            <person name="Kim C.J."/>
            <person name="Koo H.L."/>
            <person name="Kremenetskaia I."/>
            <person name="Kurtz D.B."/>
            <person name="Kwan A."/>
            <person name="Lam B."/>
            <person name="Langin-Hooper S."/>
            <person name="Lee A."/>
            <person name="Lee J.M."/>
            <person name="Lenz C.A."/>
            <person name="Li J.H."/>
            <person name="Li Y.-P."/>
            <person name="Lin X."/>
            <person name="Liu S.X."/>
            <person name="Liu Z.A."/>
            <person name="Luros J.S."/>
            <person name="Maiti R."/>
            <person name="Marziali A."/>
            <person name="Militscher J."/>
            <person name="Miranda M."/>
            <person name="Nguyen M."/>
            <person name="Nierman W.C."/>
            <person name="Osborne B.I."/>
            <person name="Pai G."/>
            <person name="Peterson J."/>
            <person name="Pham P.K."/>
            <person name="Rizzo M."/>
            <person name="Rooney T."/>
            <person name="Rowley D."/>
            <person name="Sakano H."/>
            <person name="Salzberg S.L."/>
            <person name="Schwartz J.R."/>
            <person name="Shinn P."/>
            <person name="Southwick A.M."/>
            <person name="Sun H."/>
            <person name="Tallon L.J."/>
            <person name="Tambunga G."/>
            <person name="Toriumi M.J."/>
            <person name="Town C.D."/>
            <person name="Utterback T."/>
            <person name="Van Aken S."/>
            <person name="Vaysberg M."/>
            <person name="Vysotskaia V.S."/>
            <person name="Walker M."/>
            <person name="Wu D."/>
            <person name="Yu G."/>
            <person name="Fraser C.M."/>
            <person name="Venter J.C."/>
            <person name="Davis R.W."/>
        </authorList>
    </citation>
    <scope>NUCLEOTIDE SEQUENCE [LARGE SCALE GENOMIC DNA]</scope>
    <source>
        <strain>cv. Columbia</strain>
    </source>
</reference>
<reference key="2">
    <citation type="journal article" date="2017" name="Plant J.">
        <title>Araport11: a complete reannotation of the Arabidopsis thaliana reference genome.</title>
        <authorList>
            <person name="Cheng C.Y."/>
            <person name="Krishnakumar V."/>
            <person name="Chan A.P."/>
            <person name="Thibaud-Nissen F."/>
            <person name="Schobel S."/>
            <person name="Town C.D."/>
        </authorList>
    </citation>
    <scope>GENOME REANNOTATION</scope>
    <source>
        <strain>cv. Columbia</strain>
    </source>
</reference>
<reference key="3">
    <citation type="journal article" date="2003" name="Science">
        <title>Empirical analysis of transcriptional activity in the Arabidopsis genome.</title>
        <authorList>
            <person name="Yamada K."/>
            <person name="Lim J."/>
            <person name="Dale J.M."/>
            <person name="Chen H."/>
            <person name="Shinn P."/>
            <person name="Palm C.J."/>
            <person name="Southwick A.M."/>
            <person name="Wu H.C."/>
            <person name="Kim C.J."/>
            <person name="Nguyen M."/>
            <person name="Pham P.K."/>
            <person name="Cheuk R.F."/>
            <person name="Karlin-Newmann G."/>
            <person name="Liu S.X."/>
            <person name="Lam B."/>
            <person name="Sakano H."/>
            <person name="Wu T."/>
            <person name="Yu G."/>
            <person name="Miranda M."/>
            <person name="Quach H.L."/>
            <person name="Tripp M."/>
            <person name="Chang C.H."/>
            <person name="Lee J.M."/>
            <person name="Toriumi M.J."/>
            <person name="Chan M.M."/>
            <person name="Tang C.C."/>
            <person name="Onodera C.S."/>
            <person name="Deng J.M."/>
            <person name="Akiyama K."/>
            <person name="Ansari Y."/>
            <person name="Arakawa T."/>
            <person name="Banh J."/>
            <person name="Banno F."/>
            <person name="Bowser L."/>
            <person name="Brooks S.Y."/>
            <person name="Carninci P."/>
            <person name="Chao Q."/>
            <person name="Choy N."/>
            <person name="Enju A."/>
            <person name="Goldsmith A.D."/>
            <person name="Gurjal M."/>
            <person name="Hansen N.F."/>
            <person name="Hayashizaki Y."/>
            <person name="Johnson-Hopson C."/>
            <person name="Hsuan V.W."/>
            <person name="Iida K."/>
            <person name="Karnes M."/>
            <person name="Khan S."/>
            <person name="Koesema E."/>
            <person name="Ishida J."/>
            <person name="Jiang P.X."/>
            <person name="Jones T."/>
            <person name="Kawai J."/>
            <person name="Kamiya A."/>
            <person name="Meyers C."/>
            <person name="Nakajima M."/>
            <person name="Narusaka M."/>
            <person name="Seki M."/>
            <person name="Sakurai T."/>
            <person name="Satou M."/>
            <person name="Tamse R."/>
            <person name="Vaysberg M."/>
            <person name="Wallender E.K."/>
            <person name="Wong C."/>
            <person name="Yamamura Y."/>
            <person name="Yuan S."/>
            <person name="Shinozaki K."/>
            <person name="Davis R.W."/>
            <person name="Theologis A."/>
            <person name="Ecker J.R."/>
        </authorList>
    </citation>
    <scope>NUCLEOTIDE SEQUENCE [LARGE SCALE MRNA]</scope>
    <source>
        <strain>cv. Columbia</strain>
    </source>
</reference>
<reference key="4">
    <citation type="submission" date="2006-07" db="EMBL/GenBank/DDBJ databases">
        <title>Large-scale analysis of RIKEN Arabidopsis full-length (RAFL) cDNAs.</title>
        <authorList>
            <person name="Totoki Y."/>
            <person name="Seki M."/>
            <person name="Ishida J."/>
            <person name="Nakajima M."/>
            <person name="Enju A."/>
            <person name="Kamiya A."/>
            <person name="Narusaka M."/>
            <person name="Shin-i T."/>
            <person name="Nakagawa M."/>
            <person name="Sakamoto N."/>
            <person name="Oishi K."/>
            <person name="Kohara Y."/>
            <person name="Kobayashi M."/>
            <person name="Toyoda A."/>
            <person name="Sakaki Y."/>
            <person name="Sakurai T."/>
            <person name="Iida K."/>
            <person name="Akiyama K."/>
            <person name="Satou M."/>
            <person name="Toyoda T."/>
            <person name="Konagaya A."/>
            <person name="Carninci P."/>
            <person name="Kawai J."/>
            <person name="Hayashizaki Y."/>
            <person name="Shinozaki K."/>
        </authorList>
    </citation>
    <scope>NUCLEOTIDE SEQUENCE [LARGE SCALE MRNA]</scope>
    <source>
        <strain>cv. Columbia</strain>
    </source>
</reference>
<reference key="5">
    <citation type="submission" date="2002-03" db="EMBL/GenBank/DDBJ databases">
        <title>Full-length cDNA from Arabidopsis thaliana.</title>
        <authorList>
            <person name="Brover V.V."/>
            <person name="Troukhan M.E."/>
            <person name="Alexandrov N.A."/>
            <person name="Lu Y.-P."/>
            <person name="Flavell R.B."/>
            <person name="Feldmann K.A."/>
        </authorList>
    </citation>
    <scope>NUCLEOTIDE SEQUENCE [LARGE SCALE MRNA]</scope>
</reference>
<reference key="6">
    <citation type="journal article" date="2007" name="Plant Mol. Biol.">
        <title>The Arabidopsis stearoyl-acyl carrier protein-desaturase family and the contribution of leaf isoforms to oleic acid synthesis.</title>
        <authorList>
            <person name="Kachroo A."/>
            <person name="Shanklin J."/>
            <person name="Whittle E."/>
            <person name="Lapchyk L."/>
            <person name="Hildebrand D."/>
            <person name="Kachroo P."/>
        </authorList>
    </citation>
    <scope>GENE FAMILY</scope>
</reference>
<sequence length="391" mass="44156">MLAHKSLLSFTTQWATLMPSPSTFLASRPRGPAKISAVAAPVRPALKHQNKIHTMPPEKMEIFKSLDGWAKDQILPLLKPVDQCWQPASFLPDPALPFSEFTDQVRELRERTASLPDEYFVVLVGDMITEDALPTYQTMINTLDGVRDETGASESAWASWTRAWTAEENRHGDLLRTYLYLSGRVDMLMVERTVQHLIGSGMDPGTENNPYLGFVYTSFQERATFVSHGNTARLAKSAGDPVLARICGTIAADEKRHENAYVRIVEKLLEIDPNGAVSAVADMMRKKITMPAHLMTDGRDPMLFEHFSAVAQRLEVYTADDYADILEFLVGRWRLEKLEGLTGEGQRAQEFVCGLAQRIRRLQERADERAKKLKKTHEVCFSWIFDKQISV</sequence>
<feature type="transit peptide" description="Chloroplast" evidence="2">
    <location>
        <begin position="1"/>
        <end position="38"/>
    </location>
</feature>
<feature type="chain" id="PRO_0000401424" description="Stearoyl-[acyl-carrier-protein] 9-desaturase 6, chloroplastic">
    <location>
        <begin position="39"/>
        <end position="391"/>
    </location>
</feature>
<feature type="binding site" evidence="1">
    <location>
        <position position="130"/>
    </location>
    <ligand>
        <name>Fe cation</name>
        <dbReference type="ChEBI" id="CHEBI:24875"/>
        <label>1</label>
    </ligand>
</feature>
<feature type="binding site" evidence="1">
    <location>
        <position position="168"/>
    </location>
    <ligand>
        <name>Fe cation</name>
        <dbReference type="ChEBI" id="CHEBI:24875"/>
        <label>1</label>
    </ligand>
</feature>
<feature type="binding site" evidence="1">
    <location>
        <position position="168"/>
    </location>
    <ligand>
        <name>Fe cation</name>
        <dbReference type="ChEBI" id="CHEBI:24875"/>
        <label>2</label>
    </ligand>
</feature>
<feature type="binding site" evidence="1">
    <location>
        <position position="171"/>
    </location>
    <ligand>
        <name>Fe cation</name>
        <dbReference type="ChEBI" id="CHEBI:24875"/>
        <label>1</label>
    </ligand>
</feature>
<feature type="binding site" evidence="1">
    <location>
        <position position="221"/>
    </location>
    <ligand>
        <name>Fe cation</name>
        <dbReference type="ChEBI" id="CHEBI:24875"/>
        <label>2</label>
    </ligand>
</feature>
<feature type="binding site" evidence="1">
    <location>
        <position position="254"/>
    </location>
    <ligand>
        <name>Fe cation</name>
        <dbReference type="ChEBI" id="CHEBI:24875"/>
        <label>1</label>
    </ligand>
</feature>
<feature type="binding site" evidence="1">
    <location>
        <position position="254"/>
    </location>
    <ligand>
        <name>Fe cation</name>
        <dbReference type="ChEBI" id="CHEBI:24875"/>
        <label>2</label>
    </ligand>
</feature>
<feature type="binding site" evidence="1">
    <location>
        <position position="257"/>
    </location>
    <ligand>
        <name>Fe cation</name>
        <dbReference type="ChEBI" id="CHEBI:24875"/>
        <label>2</label>
    </ligand>
</feature>
<feature type="sequence conflict" description="In Ref. 5; AAM61640." evidence="3" ref="5">
    <original>A</original>
    <variation>T</variation>
    <location>
        <position position="3"/>
    </location>
</feature>
<feature type="sequence conflict" description="In Ref. 5; AAM61640." evidence="3" ref="5">
    <original>F</original>
    <variation>P</variation>
    <location>
        <position position="10"/>
    </location>
</feature>
<feature type="sequence conflict" description="In Ref. 5; AAM61640." evidence="3" ref="5">
    <original>K</original>
    <variation>T</variation>
    <location>
        <position position="71"/>
    </location>
</feature>
<feature type="sequence conflict" description="In Ref. 5; AAM61640." evidence="3" ref="5">
    <original>T</original>
    <variation>M</variation>
    <location>
        <position position="112"/>
    </location>
</feature>
<feature type="sequence conflict" description="In Ref. 3; AAO42871 and 4; BAE99961." evidence="3" ref="3 4">
    <original>H</original>
    <variation>R</variation>
    <location>
        <position position="228"/>
    </location>
</feature>
<proteinExistence type="evidence at transcript level"/>
<protein>
    <recommendedName>
        <fullName>Stearoyl-[acyl-carrier-protein] 9-desaturase 6, chloroplastic</fullName>
        <shortName>Stearoyl-ACP desaturase 6</shortName>
        <ecNumber evidence="1">1.14.19.2</ecNumber>
    </recommendedName>
    <alternativeName>
        <fullName>Acyl-[acyl-carrier-protein] desaturase 6</fullName>
    </alternativeName>
</protein>
<accession>Q84VY3</accession>
<accession>Q8LF22</accession>
<accession>Q9MAR6</accession>
<gene>
    <name type="primary">S-ACP-DES6</name>
    <name type="synonym">AAD6</name>
    <name type="synonym">SAD6</name>
    <name type="ordered locus">At1g43800</name>
    <name type="ORF">F28H19.7</name>
</gene>
<organism>
    <name type="scientific">Arabidopsis thaliana</name>
    <name type="common">Mouse-ear cress</name>
    <dbReference type="NCBI Taxonomy" id="3702"/>
    <lineage>
        <taxon>Eukaryota</taxon>
        <taxon>Viridiplantae</taxon>
        <taxon>Streptophyta</taxon>
        <taxon>Embryophyta</taxon>
        <taxon>Tracheophyta</taxon>
        <taxon>Spermatophyta</taxon>
        <taxon>Magnoliopsida</taxon>
        <taxon>eudicotyledons</taxon>
        <taxon>Gunneridae</taxon>
        <taxon>Pentapetalae</taxon>
        <taxon>rosids</taxon>
        <taxon>malvids</taxon>
        <taxon>Brassicales</taxon>
        <taxon>Brassicaceae</taxon>
        <taxon>Camelineae</taxon>
        <taxon>Arabidopsis</taxon>
    </lineage>
</organism>
<evidence type="ECO:0000250" key="1">
    <source>
        <dbReference type="UniProtKB" id="P22337"/>
    </source>
</evidence>
<evidence type="ECO:0000255" key="2"/>
<evidence type="ECO:0000305" key="3"/>
<comment type="function">
    <text evidence="1">Converts stearoyl-ACP to oleoyl-ACP by introduction of a cis double bond between carbons 9 and 10 of the acyl chain.</text>
</comment>
<comment type="catalytic activity">
    <reaction evidence="1">
        <text>octadecanoyl-[ACP] + 2 reduced [2Fe-2S]-[ferredoxin] + O2 + 2 H(+) = (9Z)-octadecenoyl-[ACP] + 2 oxidized [2Fe-2S]-[ferredoxin] + 2 H2O</text>
        <dbReference type="Rhea" id="RHEA:11776"/>
        <dbReference type="Rhea" id="RHEA-COMP:9656"/>
        <dbReference type="Rhea" id="RHEA-COMP:9924"/>
        <dbReference type="Rhea" id="RHEA-COMP:10000"/>
        <dbReference type="Rhea" id="RHEA-COMP:10001"/>
        <dbReference type="ChEBI" id="CHEBI:15377"/>
        <dbReference type="ChEBI" id="CHEBI:15378"/>
        <dbReference type="ChEBI" id="CHEBI:15379"/>
        <dbReference type="ChEBI" id="CHEBI:33737"/>
        <dbReference type="ChEBI" id="CHEBI:33738"/>
        <dbReference type="ChEBI" id="CHEBI:78495"/>
        <dbReference type="ChEBI" id="CHEBI:78783"/>
        <dbReference type="EC" id="1.14.19.2"/>
    </reaction>
</comment>
<comment type="cofactor">
    <cofactor evidence="1">
        <name>Fe(2+)</name>
        <dbReference type="ChEBI" id="CHEBI:29033"/>
    </cofactor>
    <text evidence="1">Binds 2 Fe(2+) ions per subunit.</text>
</comment>
<comment type="pathway">
    <text>Lipid metabolism; fatty acid metabolism.</text>
</comment>
<comment type="subunit">
    <text evidence="1">Homodimer.</text>
</comment>
<comment type="subcellular location">
    <subcellularLocation>
        <location evidence="3">Plastid</location>
        <location evidence="3">Chloroplast</location>
    </subcellularLocation>
</comment>
<comment type="similarity">
    <text evidence="3">Belongs to the fatty acid desaturase type 2 family.</text>
</comment>
<comment type="sequence caution" evidence="3">
    <conflict type="erroneous initiation">
        <sequence resource="EMBL-CDS" id="AAF63100"/>
    </conflict>
    <text>Truncated N-terminus.</text>
</comment>
<keyword id="KW-0150">Chloroplast</keyword>
<keyword id="KW-0275">Fatty acid biosynthesis</keyword>
<keyword id="KW-0276">Fatty acid metabolism</keyword>
<keyword id="KW-0408">Iron</keyword>
<keyword id="KW-0444">Lipid biosynthesis</keyword>
<keyword id="KW-0443">Lipid metabolism</keyword>
<keyword id="KW-0479">Metal-binding</keyword>
<keyword id="KW-0560">Oxidoreductase</keyword>
<keyword id="KW-0934">Plastid</keyword>
<keyword id="KW-1185">Reference proteome</keyword>
<keyword id="KW-0809">Transit peptide</keyword>
<dbReference type="EC" id="1.14.19.2" evidence="1"/>
<dbReference type="EMBL" id="AC006423">
    <property type="protein sequence ID" value="AAF63100.1"/>
    <property type="status" value="ALT_INIT"/>
    <property type="molecule type" value="Genomic_DNA"/>
</dbReference>
<dbReference type="EMBL" id="CP002684">
    <property type="protein sequence ID" value="AEE31998.1"/>
    <property type="molecule type" value="Genomic_DNA"/>
</dbReference>
<dbReference type="EMBL" id="BT004625">
    <property type="protein sequence ID" value="AAO42871.1"/>
    <property type="molecule type" value="mRNA"/>
</dbReference>
<dbReference type="EMBL" id="AK227996">
    <property type="protein sequence ID" value="BAE99961.1"/>
    <property type="molecule type" value="mRNA"/>
</dbReference>
<dbReference type="EMBL" id="AY085086">
    <property type="protein sequence ID" value="AAM61640.1"/>
    <property type="molecule type" value="mRNA"/>
</dbReference>
<dbReference type="PIR" id="A96502">
    <property type="entry name" value="A96502"/>
</dbReference>
<dbReference type="RefSeq" id="NP_175048.1">
    <property type="nucleotide sequence ID" value="NM_103508.5"/>
</dbReference>
<dbReference type="SMR" id="Q84VY3"/>
<dbReference type="BioGRID" id="26202">
    <property type="interactions" value="2"/>
</dbReference>
<dbReference type="FunCoup" id="Q84VY3">
    <property type="interactions" value="164"/>
</dbReference>
<dbReference type="IntAct" id="Q84VY3">
    <property type="interactions" value="1"/>
</dbReference>
<dbReference type="STRING" id="3702.Q84VY3"/>
<dbReference type="PaxDb" id="3702-AT1G43800.1"/>
<dbReference type="ProteomicsDB" id="228343"/>
<dbReference type="EnsemblPlants" id="AT1G43800.1">
    <property type="protein sequence ID" value="AT1G43800.1"/>
    <property type="gene ID" value="AT1G43800"/>
</dbReference>
<dbReference type="GeneID" id="840977"/>
<dbReference type="Gramene" id="AT1G43800.1">
    <property type="protein sequence ID" value="AT1G43800.1"/>
    <property type="gene ID" value="AT1G43800"/>
</dbReference>
<dbReference type="KEGG" id="ath:AT1G43800"/>
<dbReference type="Araport" id="AT1G43800"/>
<dbReference type="TAIR" id="AT1G43800">
    <property type="gene designation" value="FTM1"/>
</dbReference>
<dbReference type="eggNOG" id="ENOG502QTEI">
    <property type="taxonomic scope" value="Eukaryota"/>
</dbReference>
<dbReference type="HOGENOM" id="CLU_034505_1_0_1"/>
<dbReference type="InParanoid" id="Q84VY3"/>
<dbReference type="OMA" id="KPVDQCW"/>
<dbReference type="PhylomeDB" id="Q84VY3"/>
<dbReference type="BRENDA" id="1.14.19.2">
    <property type="organism ID" value="399"/>
</dbReference>
<dbReference type="UniPathway" id="UPA00199"/>
<dbReference type="PRO" id="PR:Q84VY3"/>
<dbReference type="Proteomes" id="UP000006548">
    <property type="component" value="Chromosome 1"/>
</dbReference>
<dbReference type="ExpressionAtlas" id="Q84VY3">
    <property type="expression patterns" value="baseline and differential"/>
</dbReference>
<dbReference type="GO" id="GO:0009507">
    <property type="term" value="C:chloroplast"/>
    <property type="evidence" value="ECO:0000314"/>
    <property type="project" value="TAIR"/>
</dbReference>
<dbReference type="GO" id="GO:0046872">
    <property type="term" value="F:metal ion binding"/>
    <property type="evidence" value="ECO:0007669"/>
    <property type="project" value="UniProtKB-KW"/>
</dbReference>
<dbReference type="GO" id="GO:0045300">
    <property type="term" value="F:stearoyl-[ACP] desaturase activity"/>
    <property type="evidence" value="ECO:0007669"/>
    <property type="project" value="UniProtKB-EC"/>
</dbReference>
<dbReference type="GO" id="GO:0071456">
    <property type="term" value="P:cellular response to hypoxia"/>
    <property type="evidence" value="ECO:0007007"/>
    <property type="project" value="TAIR"/>
</dbReference>
<dbReference type="GO" id="GO:0006633">
    <property type="term" value="P:fatty acid biosynthetic process"/>
    <property type="evidence" value="ECO:0007669"/>
    <property type="project" value="UniProtKB-KW"/>
</dbReference>
<dbReference type="CDD" id="cd01050">
    <property type="entry name" value="Acyl_ACP_Desat"/>
    <property type="match status" value="1"/>
</dbReference>
<dbReference type="FunFam" id="1.10.620.20:FF:000002">
    <property type="entry name" value="Stearoyl-[acyl-carrier-protein] 9-desaturase, chloroplastic"/>
    <property type="match status" value="1"/>
</dbReference>
<dbReference type="Gene3D" id="1.10.620.20">
    <property type="entry name" value="Ribonucleotide Reductase, subunit A"/>
    <property type="match status" value="1"/>
</dbReference>
<dbReference type="InterPro" id="IPR005803">
    <property type="entry name" value="FADS-2_CS"/>
</dbReference>
<dbReference type="InterPro" id="IPR005067">
    <property type="entry name" value="Fatty_acid_desaturase-2"/>
</dbReference>
<dbReference type="InterPro" id="IPR009078">
    <property type="entry name" value="Ferritin-like_SF"/>
</dbReference>
<dbReference type="InterPro" id="IPR012348">
    <property type="entry name" value="RNR-like"/>
</dbReference>
<dbReference type="PANTHER" id="PTHR31155">
    <property type="entry name" value="ACYL- ACYL-CARRIER-PROTEIN DESATURASE-RELATED"/>
    <property type="match status" value="1"/>
</dbReference>
<dbReference type="PANTHER" id="PTHR31155:SF31">
    <property type="entry name" value="STEAROYL-[ACYL-CARRIER-PROTEIN] 9-DESATURASE 6, CHLOROPLASTIC"/>
    <property type="match status" value="1"/>
</dbReference>
<dbReference type="Pfam" id="PF03405">
    <property type="entry name" value="FA_desaturase_2"/>
    <property type="match status" value="1"/>
</dbReference>
<dbReference type="PIRSF" id="PIRSF000346">
    <property type="entry name" value="Dlt9_acylACP_des"/>
    <property type="match status" value="1"/>
</dbReference>
<dbReference type="SUPFAM" id="SSF47240">
    <property type="entry name" value="Ferritin-like"/>
    <property type="match status" value="1"/>
</dbReference>
<dbReference type="PROSITE" id="PS00574">
    <property type="entry name" value="FATTY_ACID_DESATUR_2"/>
    <property type="match status" value="1"/>
</dbReference>